<name>PRMA_BRADU</name>
<organism>
    <name type="scientific">Bradyrhizobium diazoefficiens (strain JCM 10833 / BCRC 13528 / IAM 13628 / NBRC 14792 / USDA 110)</name>
    <dbReference type="NCBI Taxonomy" id="224911"/>
    <lineage>
        <taxon>Bacteria</taxon>
        <taxon>Pseudomonadati</taxon>
        <taxon>Pseudomonadota</taxon>
        <taxon>Alphaproteobacteria</taxon>
        <taxon>Hyphomicrobiales</taxon>
        <taxon>Nitrobacteraceae</taxon>
        <taxon>Bradyrhizobium</taxon>
    </lineage>
</organism>
<dbReference type="EC" id="2.1.1.-" evidence="1"/>
<dbReference type="EMBL" id="BA000040">
    <property type="protein sequence ID" value="BAC51853.1"/>
    <property type="molecule type" value="Genomic_DNA"/>
</dbReference>
<dbReference type="RefSeq" id="NP_773228.1">
    <property type="nucleotide sequence ID" value="NC_004463.1"/>
</dbReference>
<dbReference type="RefSeq" id="WP_011089328.1">
    <property type="nucleotide sequence ID" value="NC_004463.1"/>
</dbReference>
<dbReference type="SMR" id="Q89FW1"/>
<dbReference type="FunCoup" id="Q89FW1">
    <property type="interactions" value="494"/>
</dbReference>
<dbReference type="STRING" id="224911.AAV28_30515"/>
<dbReference type="EnsemblBacteria" id="BAC51853">
    <property type="protein sequence ID" value="BAC51853"/>
    <property type="gene ID" value="BAC51853"/>
</dbReference>
<dbReference type="GeneID" id="46493559"/>
<dbReference type="KEGG" id="bja:blr6588"/>
<dbReference type="PATRIC" id="fig|224911.44.peg.6599"/>
<dbReference type="eggNOG" id="COG2264">
    <property type="taxonomic scope" value="Bacteria"/>
</dbReference>
<dbReference type="HOGENOM" id="CLU_049382_3_0_5"/>
<dbReference type="InParanoid" id="Q89FW1"/>
<dbReference type="OrthoDB" id="9785995at2"/>
<dbReference type="PhylomeDB" id="Q89FW1"/>
<dbReference type="Proteomes" id="UP000002526">
    <property type="component" value="Chromosome"/>
</dbReference>
<dbReference type="GO" id="GO:0005737">
    <property type="term" value="C:cytoplasm"/>
    <property type="evidence" value="ECO:0007669"/>
    <property type="project" value="UniProtKB-SubCell"/>
</dbReference>
<dbReference type="GO" id="GO:0008276">
    <property type="term" value="F:protein methyltransferase activity"/>
    <property type="evidence" value="ECO:0000318"/>
    <property type="project" value="GO_Central"/>
</dbReference>
<dbReference type="GO" id="GO:0016279">
    <property type="term" value="F:protein-lysine N-methyltransferase activity"/>
    <property type="evidence" value="ECO:0007669"/>
    <property type="project" value="RHEA"/>
</dbReference>
<dbReference type="GO" id="GO:0032259">
    <property type="term" value="P:methylation"/>
    <property type="evidence" value="ECO:0007669"/>
    <property type="project" value="UniProtKB-KW"/>
</dbReference>
<dbReference type="CDD" id="cd02440">
    <property type="entry name" value="AdoMet_MTases"/>
    <property type="match status" value="1"/>
</dbReference>
<dbReference type="Gene3D" id="3.40.50.150">
    <property type="entry name" value="Vaccinia Virus protein VP39"/>
    <property type="match status" value="1"/>
</dbReference>
<dbReference type="HAMAP" id="MF_00735">
    <property type="entry name" value="Methyltr_PrmA"/>
    <property type="match status" value="1"/>
</dbReference>
<dbReference type="InterPro" id="IPR050078">
    <property type="entry name" value="Ribosomal_L11_MeTrfase_PrmA"/>
</dbReference>
<dbReference type="InterPro" id="IPR004498">
    <property type="entry name" value="Ribosomal_PrmA_MeTrfase"/>
</dbReference>
<dbReference type="InterPro" id="IPR029063">
    <property type="entry name" value="SAM-dependent_MTases_sf"/>
</dbReference>
<dbReference type="NCBIfam" id="NF001784">
    <property type="entry name" value="PRK00517.2-1"/>
    <property type="match status" value="1"/>
</dbReference>
<dbReference type="PANTHER" id="PTHR43648">
    <property type="entry name" value="ELECTRON TRANSFER FLAVOPROTEIN BETA SUBUNIT LYSINE METHYLTRANSFERASE"/>
    <property type="match status" value="1"/>
</dbReference>
<dbReference type="PANTHER" id="PTHR43648:SF1">
    <property type="entry name" value="ELECTRON TRANSFER FLAVOPROTEIN BETA SUBUNIT LYSINE METHYLTRANSFERASE"/>
    <property type="match status" value="1"/>
</dbReference>
<dbReference type="Pfam" id="PF06325">
    <property type="entry name" value="PrmA"/>
    <property type="match status" value="1"/>
</dbReference>
<dbReference type="SUPFAM" id="SSF53335">
    <property type="entry name" value="S-adenosyl-L-methionine-dependent methyltransferases"/>
    <property type="match status" value="1"/>
</dbReference>
<evidence type="ECO:0000255" key="1">
    <source>
        <dbReference type="HAMAP-Rule" id="MF_00735"/>
    </source>
</evidence>
<accession>Q89FW1</accession>
<keyword id="KW-0963">Cytoplasm</keyword>
<keyword id="KW-0489">Methyltransferase</keyword>
<keyword id="KW-1185">Reference proteome</keyword>
<keyword id="KW-0949">S-adenosyl-L-methionine</keyword>
<keyword id="KW-0808">Transferase</keyword>
<comment type="function">
    <text evidence="1">Methylates ribosomal protein L11.</text>
</comment>
<comment type="catalytic activity">
    <reaction evidence="1">
        <text>L-lysyl-[protein] + 3 S-adenosyl-L-methionine = N(6),N(6),N(6)-trimethyl-L-lysyl-[protein] + 3 S-adenosyl-L-homocysteine + 3 H(+)</text>
        <dbReference type="Rhea" id="RHEA:54192"/>
        <dbReference type="Rhea" id="RHEA-COMP:9752"/>
        <dbReference type="Rhea" id="RHEA-COMP:13826"/>
        <dbReference type="ChEBI" id="CHEBI:15378"/>
        <dbReference type="ChEBI" id="CHEBI:29969"/>
        <dbReference type="ChEBI" id="CHEBI:57856"/>
        <dbReference type="ChEBI" id="CHEBI:59789"/>
        <dbReference type="ChEBI" id="CHEBI:61961"/>
    </reaction>
</comment>
<comment type="subcellular location">
    <subcellularLocation>
        <location evidence="1">Cytoplasm</location>
    </subcellularLocation>
</comment>
<comment type="similarity">
    <text evidence="1">Belongs to the methyltransferase superfamily. PrmA family.</text>
</comment>
<gene>
    <name evidence="1" type="primary">prmA</name>
    <name type="ordered locus">blr6588</name>
</gene>
<feature type="chain" id="PRO_0000192243" description="Ribosomal protein L11 methyltransferase">
    <location>
        <begin position="1"/>
        <end position="295"/>
    </location>
</feature>
<feature type="binding site" evidence="1">
    <location>
        <position position="138"/>
    </location>
    <ligand>
        <name>S-adenosyl-L-methionine</name>
        <dbReference type="ChEBI" id="CHEBI:59789"/>
    </ligand>
</feature>
<feature type="binding site" evidence="1">
    <location>
        <position position="161"/>
    </location>
    <ligand>
        <name>S-adenosyl-L-methionine</name>
        <dbReference type="ChEBI" id="CHEBI:59789"/>
    </ligand>
</feature>
<feature type="binding site" evidence="1">
    <location>
        <position position="183"/>
    </location>
    <ligand>
        <name>S-adenosyl-L-methionine</name>
        <dbReference type="ChEBI" id="CHEBI:59789"/>
    </ligand>
</feature>
<feature type="binding site" evidence="1">
    <location>
        <position position="230"/>
    </location>
    <ligand>
        <name>S-adenosyl-L-methionine</name>
        <dbReference type="ChEBI" id="CHEBI:59789"/>
    </ligand>
</feature>
<proteinExistence type="inferred from homology"/>
<reference key="1">
    <citation type="journal article" date="2002" name="DNA Res.">
        <title>Complete genomic sequence of nitrogen-fixing symbiotic bacterium Bradyrhizobium japonicum USDA110.</title>
        <authorList>
            <person name="Kaneko T."/>
            <person name="Nakamura Y."/>
            <person name="Sato S."/>
            <person name="Minamisawa K."/>
            <person name="Uchiumi T."/>
            <person name="Sasamoto S."/>
            <person name="Watanabe A."/>
            <person name="Idesawa K."/>
            <person name="Iriguchi M."/>
            <person name="Kawashima K."/>
            <person name="Kohara M."/>
            <person name="Matsumoto M."/>
            <person name="Shimpo S."/>
            <person name="Tsuruoka H."/>
            <person name="Wada T."/>
            <person name="Yamada M."/>
            <person name="Tabata S."/>
        </authorList>
    </citation>
    <scope>NUCLEOTIDE SEQUENCE [LARGE SCALE GENOMIC DNA]</scope>
    <source>
        <strain>JCM 10833 / BCRC 13528 / IAM 13628 / NBRC 14792 / USDA 110</strain>
    </source>
</reference>
<sequence>MQPSPTHRASFSIGSEAAARRVVDVLTEVFFEGDAAVAAFERPDGQWDVTLHFADAPDQAWLRELVVNSAGNEIADTLAFDTVEAKDWVKASLEDLVPVPAGRFVVHGSHDRDRVAPNKLKIEIEAALAFGTGHHGTTRGCLLLLDHVLKSSRPSNVLDLGTGTGVLAIAAAKALHRAVLASDIDPPSVRVAAENGRLNEVGHHVRVIRATGFAAPDFARAGPFDLVLANILANPLRHLASPMARHLAPGARVILSGLLTHQAPAVIAAYRARGLVPLRHLRIEGWSSLLLRKVG</sequence>
<protein>
    <recommendedName>
        <fullName evidence="1">Ribosomal protein L11 methyltransferase</fullName>
        <shortName evidence="1">L11 Mtase</shortName>
        <ecNumber evidence="1">2.1.1.-</ecNumber>
    </recommendedName>
</protein>